<evidence type="ECO:0000255" key="1"/>
<evidence type="ECO:0000269" key="2">
    <source>
    </source>
</evidence>
<evidence type="ECO:0000303" key="3">
    <source>
    </source>
</evidence>
<evidence type="ECO:0000305" key="4"/>
<dbReference type="GO" id="GO:0005576">
    <property type="term" value="C:extracellular region"/>
    <property type="evidence" value="ECO:0007669"/>
    <property type="project" value="UniProtKB-SubCell"/>
</dbReference>
<dbReference type="GO" id="GO:0007218">
    <property type="term" value="P:neuropeptide signaling pathway"/>
    <property type="evidence" value="ECO:0007669"/>
    <property type="project" value="UniProtKB-KW"/>
</dbReference>
<dbReference type="InterPro" id="IPR013231">
    <property type="entry name" value="Periviscerokinin"/>
</dbReference>
<dbReference type="Pfam" id="PF08259">
    <property type="entry name" value="Periviscerokin"/>
    <property type="match status" value="1"/>
</dbReference>
<reference evidence="4" key="1">
    <citation type="journal article" date="2009" name="BMC Evol. Biol.">
        <title>A proteomic approach for studying insect phylogeny: CAPA peptides of ancient insect taxa (Dictyoptera, Blattoptera) as a test case.</title>
        <authorList>
            <person name="Roth S."/>
            <person name="Fromm B."/>
            <person name="Gaede G."/>
            <person name="Predel R."/>
        </authorList>
    </citation>
    <scope>PROTEIN SEQUENCE</scope>
    <scope>AMIDATION AT VAL-11</scope>
    <source>
        <tissue evidence="2">Abdominal perisympathetic organs</tissue>
    </source>
</reference>
<keyword id="KW-0027">Amidation</keyword>
<keyword id="KW-0903">Direct protein sequencing</keyword>
<keyword id="KW-0527">Neuropeptide</keyword>
<keyword id="KW-0964">Secreted</keyword>
<feature type="peptide" id="PRO_0000378785" description="Periviscerokinin-2" evidence="2">
    <location>
        <begin position="1"/>
        <end position="11"/>
    </location>
</feature>
<feature type="modified residue" description="Valine amide" evidence="2">
    <location>
        <position position="11"/>
    </location>
</feature>
<organism>
    <name type="scientific">Elliptorhina sp. (strain SR-2005)</name>
    <name type="common">Hisser roach</name>
    <dbReference type="NCBI Taxonomy" id="348767"/>
    <lineage>
        <taxon>Eukaryota</taxon>
        <taxon>Metazoa</taxon>
        <taxon>Ecdysozoa</taxon>
        <taxon>Arthropoda</taxon>
        <taxon>Hexapoda</taxon>
        <taxon>Insecta</taxon>
        <taxon>Pterygota</taxon>
        <taxon>Neoptera</taxon>
        <taxon>Polyneoptera</taxon>
        <taxon>Dictyoptera</taxon>
        <taxon>Blattodea</taxon>
        <taxon>Blaberoidea</taxon>
        <taxon>Blaberidae</taxon>
        <taxon>Oxyhaloinae</taxon>
        <taxon>Elliptorhina</taxon>
    </lineage>
</organism>
<comment type="function">
    <text evidence="4">Mediates visceral muscle contractile activity (myotropic activity).</text>
</comment>
<comment type="subcellular location">
    <subcellularLocation>
        <location evidence="4">Secreted</location>
    </subcellularLocation>
</comment>
<comment type="similarity">
    <text evidence="1">Belongs to the periviscerokinin family.</text>
</comment>
<name>PVK2_ELLSS</name>
<sequence>GSSGLISMPRV</sequence>
<accession>P85605</accession>
<protein>
    <recommendedName>
        <fullName evidence="3">Periviscerokinin-2</fullName>
        <shortName evidence="3">EllSp-PVK-2</shortName>
    </recommendedName>
</protein>
<proteinExistence type="evidence at protein level"/>